<proteinExistence type="inferred from homology"/>
<name>COAD_BURTA</name>
<feature type="chain" id="PRO_1000011113" description="Phosphopantetheine adenylyltransferase">
    <location>
        <begin position="1"/>
        <end position="166"/>
    </location>
</feature>
<feature type="binding site" evidence="1">
    <location>
        <begin position="9"/>
        <end position="10"/>
    </location>
    <ligand>
        <name>ATP</name>
        <dbReference type="ChEBI" id="CHEBI:30616"/>
    </ligand>
</feature>
<feature type="binding site" evidence="1">
    <location>
        <position position="9"/>
    </location>
    <ligand>
        <name>substrate</name>
    </ligand>
</feature>
<feature type="binding site" evidence="1">
    <location>
        <position position="17"/>
    </location>
    <ligand>
        <name>ATP</name>
        <dbReference type="ChEBI" id="CHEBI:30616"/>
    </ligand>
</feature>
<feature type="binding site" evidence="1">
    <location>
        <position position="41"/>
    </location>
    <ligand>
        <name>substrate</name>
    </ligand>
</feature>
<feature type="binding site" evidence="1">
    <location>
        <position position="73"/>
    </location>
    <ligand>
        <name>substrate</name>
    </ligand>
</feature>
<feature type="binding site" evidence="1">
    <location>
        <position position="87"/>
    </location>
    <ligand>
        <name>substrate</name>
    </ligand>
</feature>
<feature type="binding site" evidence="1">
    <location>
        <begin position="88"/>
        <end position="90"/>
    </location>
    <ligand>
        <name>ATP</name>
        <dbReference type="ChEBI" id="CHEBI:30616"/>
    </ligand>
</feature>
<feature type="binding site" evidence="1">
    <location>
        <position position="98"/>
    </location>
    <ligand>
        <name>ATP</name>
        <dbReference type="ChEBI" id="CHEBI:30616"/>
    </ligand>
</feature>
<feature type="binding site" evidence="1">
    <location>
        <begin position="123"/>
        <end position="129"/>
    </location>
    <ligand>
        <name>ATP</name>
        <dbReference type="ChEBI" id="CHEBI:30616"/>
    </ligand>
</feature>
<feature type="site" description="Transition state stabilizer" evidence="1">
    <location>
        <position position="17"/>
    </location>
</feature>
<reference key="1">
    <citation type="journal article" date="2005" name="BMC Genomics">
        <title>Bacterial genome adaptation to niches: divergence of the potential virulence genes in three Burkholderia species of different survival strategies.</title>
        <authorList>
            <person name="Kim H.S."/>
            <person name="Schell M.A."/>
            <person name="Yu Y."/>
            <person name="Ulrich R.L."/>
            <person name="Sarria S.H."/>
            <person name="Nierman W.C."/>
            <person name="DeShazer D."/>
        </authorList>
    </citation>
    <scope>NUCLEOTIDE SEQUENCE [LARGE SCALE GENOMIC DNA]</scope>
    <source>
        <strain>ATCC 700388 / DSM 13276 / CCUG 48851 / CIP 106301 / E264</strain>
    </source>
</reference>
<dbReference type="EC" id="2.7.7.3" evidence="1"/>
<dbReference type="EMBL" id="CP000086">
    <property type="protein sequence ID" value="ABC39389.1"/>
    <property type="molecule type" value="Genomic_DNA"/>
</dbReference>
<dbReference type="RefSeq" id="WP_004195249.1">
    <property type="nucleotide sequence ID" value="NZ_CP008785.1"/>
</dbReference>
<dbReference type="SMR" id="Q2T1C2"/>
<dbReference type="GeneID" id="93059037"/>
<dbReference type="KEGG" id="bte:BTH_I0469"/>
<dbReference type="HOGENOM" id="CLU_100149_0_1_4"/>
<dbReference type="UniPathway" id="UPA00241">
    <property type="reaction ID" value="UER00355"/>
</dbReference>
<dbReference type="Proteomes" id="UP000001930">
    <property type="component" value="Chromosome I"/>
</dbReference>
<dbReference type="GO" id="GO:0005737">
    <property type="term" value="C:cytoplasm"/>
    <property type="evidence" value="ECO:0007669"/>
    <property type="project" value="UniProtKB-SubCell"/>
</dbReference>
<dbReference type="GO" id="GO:0005524">
    <property type="term" value="F:ATP binding"/>
    <property type="evidence" value="ECO:0007669"/>
    <property type="project" value="UniProtKB-KW"/>
</dbReference>
<dbReference type="GO" id="GO:0004595">
    <property type="term" value="F:pantetheine-phosphate adenylyltransferase activity"/>
    <property type="evidence" value="ECO:0007669"/>
    <property type="project" value="UniProtKB-UniRule"/>
</dbReference>
<dbReference type="GO" id="GO:0015937">
    <property type="term" value="P:coenzyme A biosynthetic process"/>
    <property type="evidence" value="ECO:0007669"/>
    <property type="project" value="UniProtKB-UniRule"/>
</dbReference>
<dbReference type="CDD" id="cd02163">
    <property type="entry name" value="PPAT"/>
    <property type="match status" value="1"/>
</dbReference>
<dbReference type="Gene3D" id="3.40.50.620">
    <property type="entry name" value="HUPs"/>
    <property type="match status" value="1"/>
</dbReference>
<dbReference type="HAMAP" id="MF_00151">
    <property type="entry name" value="PPAT_bact"/>
    <property type="match status" value="1"/>
</dbReference>
<dbReference type="InterPro" id="IPR004821">
    <property type="entry name" value="Cyt_trans-like"/>
</dbReference>
<dbReference type="InterPro" id="IPR001980">
    <property type="entry name" value="PPAT"/>
</dbReference>
<dbReference type="InterPro" id="IPR014729">
    <property type="entry name" value="Rossmann-like_a/b/a_fold"/>
</dbReference>
<dbReference type="NCBIfam" id="TIGR01510">
    <property type="entry name" value="coaD_prev_kdtB"/>
    <property type="match status" value="1"/>
</dbReference>
<dbReference type="NCBIfam" id="TIGR00125">
    <property type="entry name" value="cyt_tran_rel"/>
    <property type="match status" value="1"/>
</dbReference>
<dbReference type="PANTHER" id="PTHR21342">
    <property type="entry name" value="PHOSPHOPANTETHEINE ADENYLYLTRANSFERASE"/>
    <property type="match status" value="1"/>
</dbReference>
<dbReference type="PANTHER" id="PTHR21342:SF1">
    <property type="entry name" value="PHOSPHOPANTETHEINE ADENYLYLTRANSFERASE"/>
    <property type="match status" value="1"/>
</dbReference>
<dbReference type="Pfam" id="PF01467">
    <property type="entry name" value="CTP_transf_like"/>
    <property type="match status" value="1"/>
</dbReference>
<dbReference type="PRINTS" id="PR01020">
    <property type="entry name" value="LPSBIOSNTHSS"/>
</dbReference>
<dbReference type="SUPFAM" id="SSF52374">
    <property type="entry name" value="Nucleotidylyl transferase"/>
    <property type="match status" value="1"/>
</dbReference>
<evidence type="ECO:0000255" key="1">
    <source>
        <dbReference type="HAMAP-Rule" id="MF_00151"/>
    </source>
</evidence>
<keyword id="KW-0067">ATP-binding</keyword>
<keyword id="KW-0173">Coenzyme A biosynthesis</keyword>
<keyword id="KW-0963">Cytoplasm</keyword>
<keyword id="KW-0460">Magnesium</keyword>
<keyword id="KW-0547">Nucleotide-binding</keyword>
<keyword id="KW-0548">Nucleotidyltransferase</keyword>
<keyword id="KW-0808">Transferase</keyword>
<organism>
    <name type="scientific">Burkholderia thailandensis (strain ATCC 700388 / DSM 13276 / CCUG 48851 / CIP 106301 / E264)</name>
    <dbReference type="NCBI Taxonomy" id="271848"/>
    <lineage>
        <taxon>Bacteria</taxon>
        <taxon>Pseudomonadati</taxon>
        <taxon>Pseudomonadota</taxon>
        <taxon>Betaproteobacteria</taxon>
        <taxon>Burkholderiales</taxon>
        <taxon>Burkholderiaceae</taxon>
        <taxon>Burkholderia</taxon>
        <taxon>pseudomallei group</taxon>
    </lineage>
</organism>
<comment type="function">
    <text evidence="1">Reversibly transfers an adenylyl group from ATP to 4'-phosphopantetheine, yielding dephospho-CoA (dPCoA) and pyrophosphate.</text>
</comment>
<comment type="catalytic activity">
    <reaction evidence="1">
        <text>(R)-4'-phosphopantetheine + ATP + H(+) = 3'-dephospho-CoA + diphosphate</text>
        <dbReference type="Rhea" id="RHEA:19801"/>
        <dbReference type="ChEBI" id="CHEBI:15378"/>
        <dbReference type="ChEBI" id="CHEBI:30616"/>
        <dbReference type="ChEBI" id="CHEBI:33019"/>
        <dbReference type="ChEBI" id="CHEBI:57328"/>
        <dbReference type="ChEBI" id="CHEBI:61723"/>
        <dbReference type="EC" id="2.7.7.3"/>
    </reaction>
</comment>
<comment type="cofactor">
    <cofactor evidence="1">
        <name>Mg(2+)</name>
        <dbReference type="ChEBI" id="CHEBI:18420"/>
    </cofactor>
</comment>
<comment type="pathway">
    <text evidence="1">Cofactor biosynthesis; coenzyme A biosynthesis; CoA from (R)-pantothenate: step 4/5.</text>
</comment>
<comment type="subunit">
    <text evidence="1">Homohexamer.</text>
</comment>
<comment type="subcellular location">
    <subcellularLocation>
        <location evidence="1">Cytoplasm</location>
    </subcellularLocation>
</comment>
<comment type="similarity">
    <text evidence="1">Belongs to the bacterial CoaD family.</text>
</comment>
<accession>Q2T1C2</accession>
<sequence length="166" mass="18530">MVVAVYPGTFDPLTRGHEDLVRRASSIFDTLVVGVADSRAKKPFFSLEERLKIANEVLGHYPNVKVMGFTGLLKDFVRANDARVIVRGLRAVSDFEYEFQMAGMNRYLLPDVETMFMTPSDQYQFISGTIVREIAQLGGDVSKFVFPSVEKWLTEKVAAMAQGPSA</sequence>
<protein>
    <recommendedName>
        <fullName evidence="1">Phosphopantetheine adenylyltransferase</fullName>
        <ecNumber evidence="1">2.7.7.3</ecNumber>
    </recommendedName>
    <alternativeName>
        <fullName evidence="1">Dephospho-CoA pyrophosphorylase</fullName>
    </alternativeName>
    <alternativeName>
        <fullName evidence="1">Pantetheine-phosphate adenylyltransferase</fullName>
        <shortName evidence="1">PPAT</shortName>
    </alternativeName>
</protein>
<gene>
    <name evidence="1" type="primary">coaD</name>
    <name type="ordered locus">BTH_I0469</name>
</gene>